<dbReference type="EMBL" id="AK074167">
    <property type="protein sequence ID" value="BAB84993.1"/>
    <property type="status" value="ALT_INIT"/>
    <property type="molecule type" value="mRNA"/>
</dbReference>
<dbReference type="EMBL" id="AL834197">
    <property type="protein sequence ID" value="CAD38886.1"/>
    <property type="molecule type" value="mRNA"/>
</dbReference>
<dbReference type="EMBL" id="AL136295">
    <property type="status" value="NOT_ANNOTATED_CDS"/>
    <property type="molecule type" value="Genomic_DNA"/>
</dbReference>
<dbReference type="EMBL" id="BC008134">
    <property type="protein sequence ID" value="AAH08134.2"/>
    <property type="molecule type" value="mRNA"/>
</dbReference>
<dbReference type="CCDS" id="CCDS32054.1">
    <molecule id="Q8ND23-1"/>
</dbReference>
<dbReference type="RefSeq" id="NP_612369.3">
    <molecule id="Q8ND23-1"/>
    <property type="nucleotide sequence ID" value="NM_138360.4"/>
</dbReference>
<dbReference type="SMR" id="Q8ND23"/>
<dbReference type="BioGRID" id="124752">
    <property type="interactions" value="3"/>
</dbReference>
<dbReference type="FunCoup" id="Q8ND23">
    <property type="interactions" value="544"/>
</dbReference>
<dbReference type="IntAct" id="Q8ND23">
    <property type="interactions" value="1"/>
</dbReference>
<dbReference type="MINT" id="Q8ND23"/>
<dbReference type="STRING" id="9606.ENSP00000340467"/>
<dbReference type="GlyGen" id="Q8ND23">
    <property type="glycosylation" value="1 site"/>
</dbReference>
<dbReference type="iPTMnet" id="Q8ND23"/>
<dbReference type="PhosphoSitePlus" id="Q8ND23"/>
<dbReference type="BioMuta" id="CARMIL3"/>
<dbReference type="DMDM" id="172045774"/>
<dbReference type="MassIVE" id="Q8ND23"/>
<dbReference type="PaxDb" id="9606-ENSP00000340467"/>
<dbReference type="PeptideAtlas" id="Q8ND23"/>
<dbReference type="ProteomicsDB" id="72972">
    <molecule id="Q8ND23-1"/>
</dbReference>
<dbReference type="ProteomicsDB" id="72973">
    <molecule id="Q8ND23-2"/>
</dbReference>
<dbReference type="ProteomicsDB" id="72974">
    <molecule id="Q8ND23-3"/>
</dbReference>
<dbReference type="Antibodypedia" id="22575">
    <property type="antibodies" value="40 antibodies from 12 providers"/>
</dbReference>
<dbReference type="Ensembl" id="ENST00000342740.6">
    <molecule id="Q8ND23-1"/>
    <property type="protein sequence ID" value="ENSP00000340467.5"/>
    <property type="gene ID" value="ENSG00000186648.15"/>
</dbReference>
<dbReference type="Ensembl" id="ENST00000646442.2">
    <molecule id="Q8ND23-1"/>
    <property type="protein sequence ID" value="ENSP00000493710.1"/>
    <property type="gene ID" value="ENSG00000284765.2"/>
</dbReference>
<dbReference type="GeneID" id="90668"/>
<dbReference type="KEGG" id="hsa:90668"/>
<dbReference type="MANE-Select" id="ENST00000342740.6">
    <property type="protein sequence ID" value="ENSP00000340467.5"/>
    <property type="RefSeq nucleotide sequence ID" value="NM_138360.4"/>
    <property type="RefSeq protein sequence ID" value="NP_612369.3"/>
</dbReference>
<dbReference type="UCSC" id="uc001wlj.3">
    <molecule id="Q8ND23-1"/>
    <property type="organism name" value="human"/>
</dbReference>
<dbReference type="AGR" id="HGNC:20272"/>
<dbReference type="CTD" id="90668"/>
<dbReference type="DisGeNET" id="90668"/>
<dbReference type="GeneCards" id="CARMIL3"/>
<dbReference type="HGNC" id="HGNC:20272">
    <property type="gene designation" value="CARMIL3"/>
</dbReference>
<dbReference type="HPA" id="ENSG00000186648">
    <property type="expression patterns" value="Tissue enhanced (brain, pituitary gland)"/>
</dbReference>
<dbReference type="MIM" id="614716">
    <property type="type" value="gene"/>
</dbReference>
<dbReference type="neXtProt" id="NX_Q8ND23"/>
<dbReference type="OpenTargets" id="ENSG00000186648"/>
<dbReference type="PharmGKB" id="PA162394445"/>
<dbReference type="VEuPathDB" id="HostDB:ENSG00000186648"/>
<dbReference type="eggNOG" id="KOG4242">
    <property type="taxonomic scope" value="Eukaryota"/>
</dbReference>
<dbReference type="GeneTree" id="ENSGT00940000157990"/>
<dbReference type="HOGENOM" id="CLU_003119_3_2_1"/>
<dbReference type="InParanoid" id="Q8ND23"/>
<dbReference type="OMA" id="NTHPEMQ"/>
<dbReference type="OrthoDB" id="18598at2759"/>
<dbReference type="PAN-GO" id="Q8ND23">
    <property type="GO annotations" value="5 GO annotations based on evolutionary models"/>
</dbReference>
<dbReference type="PhylomeDB" id="Q8ND23"/>
<dbReference type="TreeFam" id="TF316381"/>
<dbReference type="PathwayCommons" id="Q8ND23"/>
<dbReference type="SignaLink" id="Q8ND23"/>
<dbReference type="BioGRID-ORCS" id="90668">
    <property type="hits" value="11 hits in 1135 CRISPR screens"/>
</dbReference>
<dbReference type="GenomeRNAi" id="90668"/>
<dbReference type="Pharos" id="Q8ND23">
    <property type="development level" value="Tdark"/>
</dbReference>
<dbReference type="PRO" id="PR:Q8ND23"/>
<dbReference type="Proteomes" id="UP000005640">
    <property type="component" value="Chromosome 14"/>
</dbReference>
<dbReference type="RNAct" id="Q8ND23">
    <property type="molecule type" value="protein"/>
</dbReference>
<dbReference type="Bgee" id="ENSG00000186648">
    <property type="expression patterns" value="Expressed in right hemisphere of cerebellum and 94 other cell types or tissues"/>
</dbReference>
<dbReference type="GO" id="GO:0005737">
    <property type="term" value="C:cytoplasm"/>
    <property type="evidence" value="ECO:0000314"/>
    <property type="project" value="UniProtKB"/>
</dbReference>
<dbReference type="GO" id="GO:0098978">
    <property type="term" value="C:glutamatergic synapse"/>
    <property type="evidence" value="ECO:0007669"/>
    <property type="project" value="Ensembl"/>
</dbReference>
<dbReference type="GO" id="GO:0030027">
    <property type="term" value="C:lamellipodium"/>
    <property type="evidence" value="ECO:0000318"/>
    <property type="project" value="GO_Central"/>
</dbReference>
<dbReference type="GO" id="GO:0005886">
    <property type="term" value="C:plasma membrane"/>
    <property type="evidence" value="ECO:0000314"/>
    <property type="project" value="UniProtKB"/>
</dbReference>
<dbReference type="GO" id="GO:0098794">
    <property type="term" value="C:postsynapse"/>
    <property type="evidence" value="ECO:0007669"/>
    <property type="project" value="Ensembl"/>
</dbReference>
<dbReference type="GO" id="GO:0016477">
    <property type="term" value="P:cell migration"/>
    <property type="evidence" value="ECO:0000318"/>
    <property type="project" value="GO_Central"/>
</dbReference>
<dbReference type="GO" id="GO:0034315">
    <property type="term" value="P:regulation of Arp2/3 complex-mediated actin nucleation"/>
    <property type="evidence" value="ECO:0000318"/>
    <property type="project" value="GO_Central"/>
</dbReference>
<dbReference type="GO" id="GO:0150052">
    <property type="term" value="P:regulation of postsynapse assembly"/>
    <property type="evidence" value="ECO:0007669"/>
    <property type="project" value="Ensembl"/>
</dbReference>
<dbReference type="FunFam" id="2.30.29.30:FF:000266">
    <property type="entry name" value="Capping protein, Arp2/3 and myosin-I linker protein 3"/>
    <property type="match status" value="1"/>
</dbReference>
<dbReference type="FunFam" id="3.80.10.10:FF:000009">
    <property type="entry name" value="F-actin-uncapping protein LRRC16A isoform X1"/>
    <property type="match status" value="1"/>
</dbReference>
<dbReference type="Gene3D" id="2.30.29.30">
    <property type="entry name" value="Pleckstrin-homology domain (PH domain)/Phosphotyrosine-binding domain (PTB)"/>
    <property type="match status" value="1"/>
</dbReference>
<dbReference type="Gene3D" id="3.80.10.10">
    <property type="entry name" value="Ribonuclease Inhibitor"/>
    <property type="match status" value="1"/>
</dbReference>
<dbReference type="InterPro" id="IPR031943">
    <property type="entry name" value="CARMIL_C"/>
</dbReference>
<dbReference type="InterPro" id="IPR041245">
    <property type="entry name" value="CARMIL_PH"/>
</dbReference>
<dbReference type="InterPro" id="IPR001611">
    <property type="entry name" value="Leu-rich_rpt"/>
</dbReference>
<dbReference type="InterPro" id="IPR032675">
    <property type="entry name" value="LRR_dom_sf"/>
</dbReference>
<dbReference type="InterPro" id="IPR011993">
    <property type="entry name" value="PH-like_dom_sf"/>
</dbReference>
<dbReference type="InterPro" id="IPR051279">
    <property type="entry name" value="PP1-Reg/Actin-Interact_Protein"/>
</dbReference>
<dbReference type="PANTHER" id="PTHR24112:SF43">
    <property type="entry name" value="CAPPING PROTEIN, ARP2_3 AND MYOSIN-I LINKER PROTEIN 3"/>
    <property type="match status" value="1"/>
</dbReference>
<dbReference type="PANTHER" id="PTHR24112">
    <property type="entry name" value="LEUCINE-RICH REPEAT, ISOFORM F-RELATED"/>
    <property type="match status" value="1"/>
</dbReference>
<dbReference type="Pfam" id="PF17888">
    <property type="entry name" value="Carm_PH"/>
    <property type="match status" value="1"/>
</dbReference>
<dbReference type="Pfam" id="PF16000">
    <property type="entry name" value="CARMIL_C"/>
    <property type="match status" value="1"/>
</dbReference>
<dbReference type="Pfam" id="PF13516">
    <property type="entry name" value="LRR_6"/>
    <property type="match status" value="3"/>
</dbReference>
<dbReference type="SMART" id="SM00368">
    <property type="entry name" value="LRR_RI"/>
    <property type="match status" value="4"/>
</dbReference>
<dbReference type="SUPFAM" id="SSF52047">
    <property type="entry name" value="RNI-like"/>
    <property type="match status" value="2"/>
</dbReference>
<gene>
    <name evidence="8" type="primary">CARMIL3</name>
    <name type="synonym">C14orf121</name>
    <name type="synonym">LRRC16B</name>
</gene>
<reference key="1">
    <citation type="journal article" date="2003" name="DNA Res.">
        <title>Characterization of long cDNA clones from human adult spleen. II. The complete sequences of 81 cDNA clones.</title>
        <authorList>
            <person name="Jikuya H."/>
            <person name="Takano J."/>
            <person name="Kikuno R."/>
            <person name="Hirosawa M."/>
            <person name="Nagase T."/>
            <person name="Nomura N."/>
            <person name="Ohara O."/>
        </authorList>
    </citation>
    <scope>NUCLEOTIDE SEQUENCE [LARGE SCALE MRNA] (ISOFORM 3)</scope>
    <source>
        <tissue>Spleen</tissue>
    </source>
</reference>
<reference key="2">
    <citation type="journal article" date="2007" name="BMC Genomics">
        <title>The full-ORF clone resource of the German cDNA consortium.</title>
        <authorList>
            <person name="Bechtel S."/>
            <person name="Rosenfelder H."/>
            <person name="Duda A."/>
            <person name="Schmidt C.P."/>
            <person name="Ernst U."/>
            <person name="Wellenreuther R."/>
            <person name="Mehrle A."/>
            <person name="Schuster C."/>
            <person name="Bahr A."/>
            <person name="Bloecker H."/>
            <person name="Heubner D."/>
            <person name="Hoerlein A."/>
            <person name="Michel G."/>
            <person name="Wedler H."/>
            <person name="Koehrer K."/>
            <person name="Ottenwaelder B."/>
            <person name="Poustka A."/>
            <person name="Wiemann S."/>
            <person name="Schupp I."/>
        </authorList>
    </citation>
    <scope>NUCLEOTIDE SEQUENCE [LARGE SCALE MRNA] (ISOFORM 2)</scope>
    <source>
        <tissue>Brain</tissue>
    </source>
</reference>
<reference key="3">
    <citation type="journal article" date="2003" name="Nature">
        <title>The DNA sequence and analysis of human chromosome 14.</title>
        <authorList>
            <person name="Heilig R."/>
            <person name="Eckenberg R."/>
            <person name="Petit J.-L."/>
            <person name="Fonknechten N."/>
            <person name="Da Silva C."/>
            <person name="Cattolico L."/>
            <person name="Levy M."/>
            <person name="Barbe V."/>
            <person name="De Berardinis V."/>
            <person name="Ureta-Vidal A."/>
            <person name="Pelletier E."/>
            <person name="Vico V."/>
            <person name="Anthouard V."/>
            <person name="Rowen L."/>
            <person name="Madan A."/>
            <person name="Qin S."/>
            <person name="Sun H."/>
            <person name="Du H."/>
            <person name="Pepin K."/>
            <person name="Artiguenave F."/>
            <person name="Robert C."/>
            <person name="Cruaud C."/>
            <person name="Bruels T."/>
            <person name="Jaillon O."/>
            <person name="Friedlander L."/>
            <person name="Samson G."/>
            <person name="Brottier P."/>
            <person name="Cure S."/>
            <person name="Segurens B."/>
            <person name="Aniere F."/>
            <person name="Samain S."/>
            <person name="Crespeau H."/>
            <person name="Abbasi N."/>
            <person name="Aiach N."/>
            <person name="Boscus D."/>
            <person name="Dickhoff R."/>
            <person name="Dors M."/>
            <person name="Dubois I."/>
            <person name="Friedman C."/>
            <person name="Gouyvenoux M."/>
            <person name="James R."/>
            <person name="Madan A."/>
            <person name="Mairey-Estrada B."/>
            <person name="Mangenot S."/>
            <person name="Martins N."/>
            <person name="Menard M."/>
            <person name="Oztas S."/>
            <person name="Ratcliffe A."/>
            <person name="Shaffer T."/>
            <person name="Trask B."/>
            <person name="Vacherie B."/>
            <person name="Bellemere C."/>
            <person name="Belser C."/>
            <person name="Besnard-Gonnet M."/>
            <person name="Bartol-Mavel D."/>
            <person name="Boutard M."/>
            <person name="Briez-Silla S."/>
            <person name="Combette S."/>
            <person name="Dufosse-Laurent V."/>
            <person name="Ferron C."/>
            <person name="Lechaplais C."/>
            <person name="Louesse C."/>
            <person name="Muselet D."/>
            <person name="Magdelenat G."/>
            <person name="Pateau E."/>
            <person name="Petit E."/>
            <person name="Sirvain-Trukniewicz P."/>
            <person name="Trybou A."/>
            <person name="Vega-Czarny N."/>
            <person name="Bataille E."/>
            <person name="Bluet E."/>
            <person name="Bordelais I."/>
            <person name="Dubois M."/>
            <person name="Dumont C."/>
            <person name="Guerin T."/>
            <person name="Haffray S."/>
            <person name="Hammadi R."/>
            <person name="Muanga J."/>
            <person name="Pellouin V."/>
            <person name="Robert D."/>
            <person name="Wunderle E."/>
            <person name="Gauguet G."/>
            <person name="Roy A."/>
            <person name="Sainte-Marthe L."/>
            <person name="Verdier J."/>
            <person name="Verdier-Discala C."/>
            <person name="Hillier L.W."/>
            <person name="Fulton L."/>
            <person name="McPherson J."/>
            <person name="Matsuda F."/>
            <person name="Wilson R."/>
            <person name="Scarpelli C."/>
            <person name="Gyapay G."/>
            <person name="Wincker P."/>
            <person name="Saurin W."/>
            <person name="Quetier F."/>
            <person name="Waterston R."/>
            <person name="Hood L."/>
            <person name="Weissenbach J."/>
        </authorList>
    </citation>
    <scope>NUCLEOTIDE SEQUENCE [LARGE SCALE GENOMIC DNA]</scope>
</reference>
<reference key="4">
    <citation type="journal article" date="2004" name="Genome Res.">
        <title>The status, quality, and expansion of the NIH full-length cDNA project: the Mammalian Gene Collection (MGC).</title>
        <authorList>
            <consortium name="The MGC Project Team"/>
        </authorList>
    </citation>
    <scope>NUCLEOTIDE SEQUENCE [LARGE SCALE MRNA] OF 1133-1372</scope>
    <source>
        <tissue>Brain</tissue>
    </source>
</reference>
<reference key="5">
    <citation type="journal article" date="2009" name="Mol. Biol. Cell">
        <title>Distinct roles for CARMIL isoforms in cell migration.</title>
        <authorList>
            <person name="Liang Y."/>
            <person name="Niederstrasser H."/>
            <person name="Edwards M."/>
            <person name="Jackson C.E."/>
            <person name="Cooper J.A."/>
        </authorList>
    </citation>
    <scope>IDENTIFICATION</scope>
</reference>
<reference key="6">
    <citation type="journal article" date="2011" name="Oncogene">
        <title>Identifying LRRC16B as an oncofetal gene with transforming enhancing capability using a combined bioinformatics and experimental approach.</title>
        <authorList>
            <person name="Hsu C.C."/>
            <person name="Chiang C.W."/>
            <person name="Cheng H.C."/>
            <person name="Chang W.T."/>
            <person name="Chou C.Y."/>
            <person name="Tsai H.W."/>
            <person name="Lee C.T."/>
            <person name="Wu Z.H."/>
            <person name="Lee T.Y."/>
            <person name="Chao A."/>
            <person name="Chow N.H."/>
            <person name="Ho C.L."/>
        </authorList>
    </citation>
    <scope>SUBCELLULAR LOCATION</scope>
    <scope>TISSUE SPECIFICITY</scope>
</reference>
<reference key="7">
    <citation type="journal article" date="2016" name="J. Biol. Chem.">
        <title>Cell migration and invadopodia formation require a membrane-binding domain of CARMIL2.</title>
        <authorList>
            <person name="Lanier M.H."/>
            <person name="McConnell P."/>
            <person name="Cooper J.A."/>
        </authorList>
    </citation>
    <scope>SUBCELLULAR LOCATION</scope>
    <scope>DOMAIN</scope>
</reference>
<name>CARL3_HUMAN</name>
<evidence type="ECO:0000256" key="1">
    <source>
        <dbReference type="SAM" id="MobiDB-lite"/>
    </source>
</evidence>
<evidence type="ECO:0000269" key="2">
    <source>
    </source>
</evidence>
<evidence type="ECO:0000269" key="3">
    <source>
    </source>
</evidence>
<evidence type="ECO:0000303" key="4">
    <source>
    </source>
</evidence>
<evidence type="ECO:0000303" key="5">
    <source>
    </source>
</evidence>
<evidence type="ECO:0000303" key="6">
    <source>
    </source>
</evidence>
<evidence type="ECO:0000305" key="7"/>
<evidence type="ECO:0000312" key="8">
    <source>
        <dbReference type="HGNC" id="HGNC:20272"/>
    </source>
</evidence>
<sequence>MAKPSVELTRELQDSIRRCLSQGAVLQQHHVKLETKPKKFEDRVLALTSWRLHLFLLKVPAKVESSFNVLEIRAFNTLSQNQILVETERGMVSMRLPSAESVDQVTRHVSSALSKVCPGPGCLIRRGNADTPEGPRDTSPNSETSTSTTHSVCGGFSETYAALCDYNGLHCREEVQWDVDTIYHAEDNREFNLLDFSHLESRDLALMVAALAYNQWFTKLYCKDLRLGSEVLEQVLHTLSKSGSLEELVLDNAGLKTDFVQKLAGVFGENGSCVLHALTLSHNPIEDKGFLSLSQQLLCFPSGLTKLCLAKTAISPRGLQALGQTFGANPAFASSLRYLDLSKNPGLLATDEANALYSFLAQPNALVHLDLSGTDCVIDLLLGALLHGCCSHLTYLNLARNSCSHRKGREAPPAFKQFFSSAYTLSHVNLSATKLPLEALRALLQGLSLNSHLSDLHLDLSSCELRSAGAQALQEQLGAVTCVGSLDLSDNGFDSDLLTLVPALGKNKSLKHLFLGKNFNVKAKTLEEILHKLVQLIQEEDCSLQSLSVADSRLKLRTSILINALGSNTCLAKVDLSGNGMEDIGAKMLSKALQINSSLRTILWDRNNTSALGFLDIARALESNHTLRFMSFPVSDISQAYRSAPERTEDVWQKIQWCLVRNNHSQTCPQEQAFRLQQGLVTSSAEQMLQRLCGRVQEEVRALRLCPLEPVQDELLYARDLIKDAKNSRALFPSLYELGHVLANDGPVRQRLESVASEVSKAVDKELQVILESMVSLTQELCPVAMRVAEGHNKMLSNVAERVTVPRNFIRGALLEQAGQDIQNKLDEVKLSVVTYLTSSIVDEILQELYHSHKSLARHLTQLRTLSDPPGCPGQGQDLSSRGRGRNHDHEETTDDELGTNIDTMAIKKQKRCRKIRPVSAFISGSPQDMESQLGNLGIPPGWFSGLGGSQPTASGSWEGLSELPTHGYKLRHQTQGRPRPPRTTPPGPGRPSMPAPGTRQENGMATRLDEGLEDFFSRRVLEESSSYPRTLRTVRPGLSEAPLPPLQKKRRRGLFHFRRPRSFKGDRGPGSPTTGLLLPPPPPPPPTQESPPSPDPPSLGNNSSPCWSPEEESSLLPGFGGGRGPSFRRKMGTEGSEPGEGGPAPGTAQQPRVHGVALPGLERAKGWSFDGKREGPGPDQEGSTQAWQKRRSSDDAGPGSWKPPPPPQSTKPSFSAMRRAEATWHIAEESAPNHSCQSPSPASQDGEEEKEGTLFPERTLPARNAKLQDPALAPWPPKPVAVPRGRQPPQEPGVREEAEAGDAAPGVNKPRLRLSSQQDQEEPEVQGPPDPGRRTAPLKPKRTRRAQSCDKLEPDRRRPPDPTGTSEPGTD</sequence>
<accession>Q8ND23</accession>
<accession>Q8TEF7</accession>
<accession>Q96HS9</accession>
<feature type="chain" id="PRO_0000324608" description="Capping protein, Arp2/3 and myosin-I linker protein 3">
    <location>
        <begin position="1"/>
        <end position="1372"/>
    </location>
</feature>
<feature type="repeat" description="LRR 1">
    <location>
        <begin position="244"/>
        <end position="264"/>
    </location>
</feature>
<feature type="repeat" description="LRR 2">
    <location>
        <begin position="274"/>
        <end position="295"/>
    </location>
</feature>
<feature type="repeat" description="LRR 3">
    <location>
        <begin position="303"/>
        <end position="323"/>
    </location>
</feature>
<feature type="repeat" description="LRR 4">
    <location>
        <begin position="335"/>
        <end position="357"/>
    </location>
</feature>
<feature type="repeat" description="LRR 5">
    <location>
        <begin position="365"/>
        <end position="385"/>
    </location>
</feature>
<feature type="repeat" description="LRR 6">
    <location>
        <begin position="392"/>
        <end position="413"/>
    </location>
</feature>
<feature type="repeat" description="LRR 7">
    <location>
        <begin position="424"/>
        <end position="444"/>
    </location>
</feature>
<feature type="repeat" description="LRR 8">
    <location>
        <begin position="455"/>
        <end position="475"/>
    </location>
</feature>
<feature type="repeat" description="LRR 9">
    <location>
        <begin position="482"/>
        <end position="501"/>
    </location>
</feature>
<feature type="repeat" description="LRR 10">
    <location>
        <begin position="509"/>
        <end position="530"/>
    </location>
</feature>
<feature type="region of interest" description="Disordered" evidence="1">
    <location>
        <begin position="126"/>
        <end position="151"/>
    </location>
</feature>
<feature type="region of interest" description="Disordered" evidence="1">
    <location>
        <begin position="865"/>
        <end position="900"/>
    </location>
</feature>
<feature type="region of interest" description="Disordered" evidence="1">
    <location>
        <begin position="970"/>
        <end position="1003"/>
    </location>
</feature>
<feature type="region of interest" description="Disordered" evidence="1">
    <location>
        <begin position="1024"/>
        <end position="1372"/>
    </location>
</feature>
<feature type="region of interest" description="Necessary for localization at the cell membrane" evidence="3">
    <location>
        <begin position="1040"/>
        <end position="1073"/>
    </location>
</feature>
<feature type="compositionally biased region" description="Low complexity" evidence="1">
    <location>
        <begin position="138"/>
        <end position="151"/>
    </location>
</feature>
<feature type="compositionally biased region" description="Pro residues" evidence="1">
    <location>
        <begin position="982"/>
        <end position="995"/>
    </location>
</feature>
<feature type="compositionally biased region" description="Basic residues" evidence="1">
    <location>
        <begin position="1048"/>
        <end position="1063"/>
    </location>
</feature>
<feature type="compositionally biased region" description="Pro residues" evidence="1">
    <location>
        <begin position="1079"/>
        <end position="1098"/>
    </location>
</feature>
<feature type="compositionally biased region" description="Low complexity" evidence="1">
    <location>
        <begin position="1099"/>
        <end position="1109"/>
    </location>
</feature>
<feature type="compositionally biased region" description="Basic and acidic residues" evidence="1">
    <location>
        <begin position="1163"/>
        <end position="1177"/>
    </location>
</feature>
<feature type="compositionally biased region" description="Basic and acidic residues" evidence="1">
    <location>
        <begin position="1219"/>
        <end position="1229"/>
    </location>
</feature>
<feature type="compositionally biased region" description="Polar residues" evidence="1">
    <location>
        <begin position="1233"/>
        <end position="1244"/>
    </location>
</feature>
<feature type="compositionally biased region" description="Basic and acidic residues" evidence="1">
    <location>
        <begin position="1348"/>
        <end position="1361"/>
    </location>
</feature>
<feature type="splice variant" id="VSP_032305" description="In isoform 2." evidence="5">
    <location>
        <begin position="1"/>
        <end position="904"/>
    </location>
</feature>
<feature type="splice variant" id="VSP_032306" description="In isoform 3." evidence="4">
    <location>
        <begin position="1"/>
        <end position="580"/>
    </location>
</feature>
<feature type="splice variant" id="VSP_032307" description="In isoform 3." evidence="4">
    <original>LFPSLYELGHVLANDGPVRQRLE</original>
    <variation>VSPPQATLPLKSGEPKKADHAKP</variation>
    <location>
        <begin position="731"/>
        <end position="753"/>
    </location>
</feature>
<feature type="splice variant" id="VSP_032308" description="In isoform 3." evidence="4">
    <location>
        <begin position="754"/>
        <end position="1372"/>
    </location>
</feature>
<feature type="splice variant" id="VSP_032309" description="In isoform 2." evidence="5">
    <location>
        <begin position="1133"/>
        <end position="1175"/>
    </location>
</feature>
<feature type="sequence variant" id="VAR_039845" description="In dbSNP:rs10146906.">
    <original>L</original>
    <variation>M</variation>
    <location>
        <position position="1022"/>
    </location>
</feature>
<feature type="sequence conflict" description="In Ref. 2; CAD38886." evidence="7" ref="2">
    <original>R</original>
    <variation>W</variation>
    <location>
        <position position="1062"/>
    </location>
</feature>
<proteinExistence type="evidence at protein level"/>
<comment type="subcellular location">
    <subcellularLocation>
        <location evidence="2">Cytoplasm</location>
    </subcellularLocation>
    <subcellularLocation>
        <location evidence="3">Cell membrane</location>
    </subcellularLocation>
</comment>
<comment type="alternative products">
    <event type="alternative splicing"/>
    <isoform>
        <id>Q8ND23-1</id>
        <name>1</name>
        <sequence type="displayed"/>
    </isoform>
    <isoform>
        <id>Q8ND23-2</id>
        <name>2</name>
        <sequence type="described" ref="VSP_032305 VSP_032309"/>
    </isoform>
    <isoform>
        <id>Q8ND23-3</id>
        <name>3</name>
        <sequence type="described" ref="VSP_032306 VSP_032307 VSP_032308"/>
    </isoform>
</comment>
<comment type="tissue specificity">
    <text evidence="2">Widely expressed, with much higher levels in fetal tissues than in adult ones. Up-regulated in certain cancer tissues.</text>
</comment>
<comment type="domain">
    <text evidence="2">The C-terminus is necessary for localization to the cell membrane (PubMed:26578515).</text>
</comment>
<comment type="similarity">
    <text evidence="7">Belongs to the CARMIL family.</text>
</comment>
<comment type="sequence caution" evidence="7">
    <conflict type="erroneous initiation">
        <sequence resource="EMBL-CDS" id="BAB84993"/>
    </conflict>
</comment>
<keyword id="KW-0025">Alternative splicing</keyword>
<keyword id="KW-1003">Cell membrane</keyword>
<keyword id="KW-0963">Cytoplasm</keyword>
<keyword id="KW-0433">Leucine-rich repeat</keyword>
<keyword id="KW-0472">Membrane</keyword>
<keyword id="KW-1267">Proteomics identification</keyword>
<keyword id="KW-1185">Reference proteome</keyword>
<keyword id="KW-0677">Repeat</keyword>
<protein>
    <recommendedName>
        <fullName evidence="6">Capping protein, Arp2/3 and myosin-I linker protein 3</fullName>
    </recommendedName>
    <alternativeName>
        <fullName>Capping protein regulator and myosin 1 linker protein 3</fullName>
    </alternativeName>
    <alternativeName>
        <fullName>Leucine-rich repeat-containing protein 16B</fullName>
    </alternativeName>
</protein>
<organism>
    <name type="scientific">Homo sapiens</name>
    <name type="common">Human</name>
    <dbReference type="NCBI Taxonomy" id="9606"/>
    <lineage>
        <taxon>Eukaryota</taxon>
        <taxon>Metazoa</taxon>
        <taxon>Chordata</taxon>
        <taxon>Craniata</taxon>
        <taxon>Vertebrata</taxon>
        <taxon>Euteleostomi</taxon>
        <taxon>Mammalia</taxon>
        <taxon>Eutheria</taxon>
        <taxon>Euarchontoglires</taxon>
        <taxon>Primates</taxon>
        <taxon>Haplorrhini</taxon>
        <taxon>Catarrhini</taxon>
        <taxon>Hominidae</taxon>
        <taxon>Homo</taxon>
    </lineage>
</organism>